<reference key="1">
    <citation type="submission" date="2006-03" db="EMBL/GenBank/DDBJ databases">
        <title>Complete sequence of Shewanella denitrificans OS217.</title>
        <authorList>
            <consortium name="US DOE Joint Genome Institute"/>
            <person name="Copeland A."/>
            <person name="Lucas S."/>
            <person name="Lapidus A."/>
            <person name="Barry K."/>
            <person name="Detter J.C."/>
            <person name="Glavina del Rio T."/>
            <person name="Hammon N."/>
            <person name="Israni S."/>
            <person name="Dalin E."/>
            <person name="Tice H."/>
            <person name="Pitluck S."/>
            <person name="Brettin T."/>
            <person name="Bruce D."/>
            <person name="Han C."/>
            <person name="Tapia R."/>
            <person name="Gilna P."/>
            <person name="Kiss H."/>
            <person name="Schmutz J."/>
            <person name="Larimer F."/>
            <person name="Land M."/>
            <person name="Hauser L."/>
            <person name="Kyrpides N."/>
            <person name="Lykidis A."/>
            <person name="Richardson P."/>
        </authorList>
    </citation>
    <scope>NUCLEOTIDE SEQUENCE [LARGE SCALE GENOMIC DNA]</scope>
    <source>
        <strain>OS217 / ATCC BAA-1090 / DSM 15013</strain>
    </source>
</reference>
<name>TOLB_SHEDO</name>
<feature type="signal peptide" evidence="1">
    <location>
        <begin position="1"/>
        <end position="21"/>
    </location>
</feature>
<feature type="chain" id="PRO_5000114507" description="Tol-Pal system protein TolB" evidence="1">
    <location>
        <begin position="22"/>
        <end position="442"/>
    </location>
</feature>
<protein>
    <recommendedName>
        <fullName evidence="1">Tol-Pal system protein TolB</fullName>
    </recommendedName>
</protein>
<sequence>MKILAKWLTLATLMLTAQVNAALDIVITEGVDAARPIAVVPFVWEGPGAAPQQISDIVMGDLSRSGTFKPLDIRALPQHGISSVAQFAAASWGKVGAEAVVMGSIKPYGVDQFLVNFELIDLVRAQSQALKGPQNNTELVLESRQTVISANQFRQYGHRISDIVYEKLTGIRGAFLTRTAYVVVKQGQKAPYHLMIADYDGYNEQMLLRSPEPLMSPTWSPDGRRLAYVSFENRKAEIFVQDIYSQTRTLVSSYPGINGAPSFSPDGKKLAVTLSKDGQPEVYVIDIATKAAKRITDHYSIDTEPSWYPDGKSLLFTSERGGKPQIYSVHLDTGKVSRVTFEGEWNLGGSITPDGRSMIFVNRTNGKFHIARMDLATRFLQVLSSTQLDESPSVAPNGTMVIYGTTHQGKQVLAAVSMDGRFKARLPVGQGEVKSPAWSPFL</sequence>
<organism>
    <name type="scientific">Shewanella denitrificans (strain OS217 / ATCC BAA-1090 / DSM 15013)</name>
    <dbReference type="NCBI Taxonomy" id="318161"/>
    <lineage>
        <taxon>Bacteria</taxon>
        <taxon>Pseudomonadati</taxon>
        <taxon>Pseudomonadota</taxon>
        <taxon>Gammaproteobacteria</taxon>
        <taxon>Alteromonadales</taxon>
        <taxon>Shewanellaceae</taxon>
        <taxon>Shewanella</taxon>
    </lineage>
</organism>
<dbReference type="EMBL" id="CP000302">
    <property type="protein sequence ID" value="ABE54680.1"/>
    <property type="molecule type" value="Genomic_DNA"/>
</dbReference>
<dbReference type="RefSeq" id="WP_011495838.1">
    <property type="nucleotide sequence ID" value="NC_007954.1"/>
</dbReference>
<dbReference type="SMR" id="Q12PE6"/>
<dbReference type="STRING" id="318161.Sden_1394"/>
<dbReference type="KEGG" id="sdn:Sden_1394"/>
<dbReference type="eggNOG" id="COG0823">
    <property type="taxonomic scope" value="Bacteria"/>
</dbReference>
<dbReference type="HOGENOM" id="CLU_047123_0_0_6"/>
<dbReference type="OrthoDB" id="9802240at2"/>
<dbReference type="Proteomes" id="UP000001982">
    <property type="component" value="Chromosome"/>
</dbReference>
<dbReference type="GO" id="GO:0042597">
    <property type="term" value="C:periplasmic space"/>
    <property type="evidence" value="ECO:0007669"/>
    <property type="project" value="UniProtKB-SubCell"/>
</dbReference>
<dbReference type="GO" id="GO:0051301">
    <property type="term" value="P:cell division"/>
    <property type="evidence" value="ECO:0007669"/>
    <property type="project" value="UniProtKB-UniRule"/>
</dbReference>
<dbReference type="GO" id="GO:0017038">
    <property type="term" value="P:protein import"/>
    <property type="evidence" value="ECO:0007669"/>
    <property type="project" value="InterPro"/>
</dbReference>
<dbReference type="Gene3D" id="2.120.10.30">
    <property type="entry name" value="TolB, C-terminal domain"/>
    <property type="match status" value="1"/>
</dbReference>
<dbReference type="Gene3D" id="3.40.50.10070">
    <property type="entry name" value="TolB, N-terminal domain"/>
    <property type="match status" value="1"/>
</dbReference>
<dbReference type="HAMAP" id="MF_00671">
    <property type="entry name" value="TolB"/>
    <property type="match status" value="1"/>
</dbReference>
<dbReference type="InterPro" id="IPR011042">
    <property type="entry name" value="6-blade_b-propeller_TolB-like"/>
</dbReference>
<dbReference type="InterPro" id="IPR011659">
    <property type="entry name" value="PD40"/>
</dbReference>
<dbReference type="InterPro" id="IPR014167">
    <property type="entry name" value="Tol-Pal_TolB"/>
</dbReference>
<dbReference type="InterPro" id="IPR007195">
    <property type="entry name" value="TolB_N"/>
</dbReference>
<dbReference type="NCBIfam" id="TIGR02800">
    <property type="entry name" value="propeller_TolB"/>
    <property type="match status" value="1"/>
</dbReference>
<dbReference type="PANTHER" id="PTHR36842:SF1">
    <property type="entry name" value="PROTEIN TOLB"/>
    <property type="match status" value="1"/>
</dbReference>
<dbReference type="PANTHER" id="PTHR36842">
    <property type="entry name" value="PROTEIN TOLB HOMOLOG"/>
    <property type="match status" value="1"/>
</dbReference>
<dbReference type="Pfam" id="PF07676">
    <property type="entry name" value="PD40"/>
    <property type="match status" value="4"/>
</dbReference>
<dbReference type="Pfam" id="PF04052">
    <property type="entry name" value="TolB_N"/>
    <property type="match status" value="1"/>
</dbReference>
<dbReference type="SUPFAM" id="SSF52964">
    <property type="entry name" value="TolB, N-terminal domain"/>
    <property type="match status" value="1"/>
</dbReference>
<dbReference type="SUPFAM" id="SSF69304">
    <property type="entry name" value="Tricorn protease N-terminal domain"/>
    <property type="match status" value="1"/>
</dbReference>
<accession>Q12PE6</accession>
<evidence type="ECO:0000255" key="1">
    <source>
        <dbReference type="HAMAP-Rule" id="MF_00671"/>
    </source>
</evidence>
<keyword id="KW-0131">Cell cycle</keyword>
<keyword id="KW-0132">Cell division</keyword>
<keyword id="KW-0574">Periplasm</keyword>
<keyword id="KW-1185">Reference proteome</keyword>
<keyword id="KW-0732">Signal</keyword>
<comment type="function">
    <text evidence="1">Part of the Tol-Pal system, which plays a role in outer membrane invagination during cell division and is important for maintaining outer membrane integrity.</text>
</comment>
<comment type="subunit">
    <text evidence="1">The Tol-Pal system is composed of five core proteins: the inner membrane proteins TolA, TolQ and TolR, the periplasmic protein TolB and the outer membrane protein Pal. They form a network linking the inner and outer membranes and the peptidoglycan layer.</text>
</comment>
<comment type="subcellular location">
    <subcellularLocation>
        <location evidence="1">Periplasm</location>
    </subcellularLocation>
</comment>
<comment type="similarity">
    <text evidence="1">Belongs to the TolB family.</text>
</comment>
<proteinExistence type="inferred from homology"/>
<gene>
    <name evidence="1" type="primary">tolB</name>
    <name type="ordered locus">Sden_1394</name>
</gene>